<feature type="signal peptide" evidence="2">
    <location>
        <begin position="1"/>
        <end position="27"/>
    </location>
</feature>
<feature type="chain" id="PRO_5009345181" description="Leucine-rich repeat protein 2" evidence="2">
    <location>
        <begin position="28"/>
        <end position="218"/>
    </location>
</feature>
<feature type="repeat" description="LRR 1" evidence="2">
    <location>
        <begin position="69"/>
        <end position="93"/>
    </location>
</feature>
<feature type="repeat" description="LRR 2" evidence="2">
    <location>
        <begin position="94"/>
        <end position="117"/>
    </location>
</feature>
<feature type="repeat" description="LRR 3" evidence="2">
    <location>
        <begin position="119"/>
        <end position="141"/>
    </location>
</feature>
<feature type="repeat" description="LRR 4" evidence="2">
    <location>
        <begin position="142"/>
        <end position="165"/>
    </location>
</feature>
<feature type="repeat" description="LRR 5" evidence="2">
    <location>
        <begin position="167"/>
        <end position="190"/>
    </location>
</feature>
<feature type="splice variant" id="VSP_058843" description="In isoform 2.">
    <original>L</original>
    <variation>LYGIITLLPFDYLKTFTLSVTHITFCFESYS</variation>
    <location>
        <position position="99"/>
    </location>
</feature>
<feature type="sequence conflict" description="In Ref. 4; BAD44554." evidence="3" ref="4">
    <original>W</original>
    <variation>R</variation>
    <location>
        <position position="51"/>
    </location>
</feature>
<protein>
    <recommendedName>
        <fullName evidence="3">Leucine-rich repeat protein 2</fullName>
        <shortName evidence="3">AtLRR2</shortName>
    </recommendedName>
</protein>
<dbReference type="EMBL" id="AL162691">
    <property type="protein sequence ID" value="CAB83146.1"/>
    <property type="status" value="ALT_SEQ"/>
    <property type="molecule type" value="Genomic_DNA"/>
</dbReference>
<dbReference type="EMBL" id="CP002686">
    <property type="protein sequence ID" value="AEE77824.1"/>
    <property type="molecule type" value="Genomic_DNA"/>
</dbReference>
<dbReference type="EMBL" id="CP002686">
    <property type="protein sequence ID" value="AEE77825.1"/>
    <property type="molecule type" value="Genomic_DNA"/>
</dbReference>
<dbReference type="EMBL" id="BT010407">
    <property type="protein sequence ID" value="AAQ62408.1"/>
    <property type="molecule type" value="mRNA"/>
</dbReference>
<dbReference type="EMBL" id="AK175133">
    <property type="protein sequence ID" value="BAD42896.1"/>
    <property type="molecule type" value="mRNA"/>
</dbReference>
<dbReference type="EMBL" id="AK175524">
    <property type="protein sequence ID" value="BAD43287.1"/>
    <property type="molecule type" value="mRNA"/>
</dbReference>
<dbReference type="EMBL" id="AK176628">
    <property type="protein sequence ID" value="BAD44391.1"/>
    <property type="molecule type" value="mRNA"/>
</dbReference>
<dbReference type="EMBL" id="AK176756">
    <property type="protein sequence ID" value="BAD44519.1"/>
    <property type="molecule type" value="mRNA"/>
</dbReference>
<dbReference type="EMBL" id="AK176791">
    <property type="protein sequence ID" value="BAD44554.1"/>
    <property type="molecule type" value="mRNA"/>
</dbReference>
<dbReference type="PIR" id="T47410">
    <property type="entry name" value="T47410"/>
</dbReference>
<dbReference type="RefSeq" id="NP_189960.2">
    <molecule id="Q6NQP4-1"/>
    <property type="nucleotide sequence ID" value="NM_114242.4"/>
</dbReference>
<dbReference type="RefSeq" id="NP_974381.1">
    <molecule id="Q6NQP4-2"/>
    <property type="nucleotide sequence ID" value="NM_202652.3"/>
</dbReference>
<dbReference type="SMR" id="Q6NQP4"/>
<dbReference type="FunCoup" id="Q6NQP4">
    <property type="interactions" value="1666"/>
</dbReference>
<dbReference type="STRING" id="3702.Q6NQP4"/>
<dbReference type="ProteomicsDB" id="238800">
    <molecule id="Q6NQP4-1"/>
</dbReference>
<dbReference type="EnsemblPlants" id="AT3G43740.1">
    <molecule id="Q6NQP4-1"/>
    <property type="protein sequence ID" value="AT3G43740.1"/>
    <property type="gene ID" value="AT3G43740"/>
</dbReference>
<dbReference type="EnsemblPlants" id="AT3G43740.2">
    <molecule id="Q6NQP4-2"/>
    <property type="protein sequence ID" value="AT3G43740.2"/>
    <property type="gene ID" value="AT3G43740"/>
</dbReference>
<dbReference type="GeneID" id="823485"/>
<dbReference type="Gramene" id="AT3G43740.1">
    <molecule id="Q6NQP4-1"/>
    <property type="protein sequence ID" value="AT3G43740.1"/>
    <property type="gene ID" value="AT3G43740"/>
</dbReference>
<dbReference type="Gramene" id="AT3G43740.2">
    <molecule id="Q6NQP4-2"/>
    <property type="protein sequence ID" value="AT3G43740.2"/>
    <property type="gene ID" value="AT3G43740"/>
</dbReference>
<dbReference type="KEGG" id="ath:AT3G43740"/>
<dbReference type="Araport" id="AT3G43740"/>
<dbReference type="TAIR" id="AT3G43740"/>
<dbReference type="HOGENOM" id="CLU_000288_18_9_1"/>
<dbReference type="InParanoid" id="Q6NQP4"/>
<dbReference type="OMA" id="QYLYGII"/>
<dbReference type="PhylomeDB" id="Q6NQP4"/>
<dbReference type="PRO" id="PR:Q6NQP4"/>
<dbReference type="Proteomes" id="UP000006548">
    <property type="component" value="Chromosome 3"/>
</dbReference>
<dbReference type="ExpressionAtlas" id="Q6NQP4">
    <property type="expression patterns" value="baseline and differential"/>
</dbReference>
<dbReference type="GO" id="GO:0006952">
    <property type="term" value="P:defense response"/>
    <property type="evidence" value="ECO:0007669"/>
    <property type="project" value="UniProtKB-KW"/>
</dbReference>
<dbReference type="FunFam" id="3.80.10.10:FF:000024">
    <property type="entry name" value="Somatic embryogenesis receptor kinase 1"/>
    <property type="match status" value="1"/>
</dbReference>
<dbReference type="Gene3D" id="3.80.10.10">
    <property type="entry name" value="Ribonuclease Inhibitor"/>
    <property type="match status" value="1"/>
</dbReference>
<dbReference type="InterPro" id="IPR032675">
    <property type="entry name" value="LRR_dom_sf"/>
</dbReference>
<dbReference type="InterPro" id="IPR013210">
    <property type="entry name" value="LRR_N_plant-typ"/>
</dbReference>
<dbReference type="InterPro" id="IPR055414">
    <property type="entry name" value="LRR_R13L4/SHOC2-like"/>
</dbReference>
<dbReference type="PANTHER" id="PTHR47988">
    <property type="entry name" value="SOMATIC EMBRYOGENESIS RECEPTOR KINASE 1"/>
    <property type="match status" value="1"/>
</dbReference>
<dbReference type="Pfam" id="PF23598">
    <property type="entry name" value="LRR_14"/>
    <property type="match status" value="1"/>
</dbReference>
<dbReference type="Pfam" id="PF08263">
    <property type="entry name" value="LRRNT_2"/>
    <property type="match status" value="1"/>
</dbReference>
<dbReference type="SUPFAM" id="SSF52058">
    <property type="entry name" value="L domain-like"/>
    <property type="match status" value="1"/>
</dbReference>
<sequence>MVAQNSRRELLAASLILTLALIRLTEANSEGDALHALRRSLSDPDNVVQSWDPTLVNPCTWFHVTCNQHHQVTRLDLGNSNLSGHLVPELGKLEHLQYLELYKNEIQGTIPSELGNLKSLISLDLYNNNLTGKIPSSLGKLKSLVFLRLNENRLTGPIPRELTVISSLKVVDVSGNDLCGTIPVEGPFEHIPMQNFENNLRLEGPELLGLASYDTNCT</sequence>
<gene>
    <name evidence="3" type="primary">LRR2</name>
    <name evidence="4" type="ordered locus">At3g43740</name>
    <name evidence="6" type="ORF">T28A8.30</name>
</gene>
<name>LRR2_ARATH</name>
<proteinExistence type="evidence at transcript level"/>
<organism evidence="5">
    <name type="scientific">Arabidopsis thaliana</name>
    <name type="common">Mouse-ear cress</name>
    <dbReference type="NCBI Taxonomy" id="3702"/>
    <lineage>
        <taxon>Eukaryota</taxon>
        <taxon>Viridiplantae</taxon>
        <taxon>Streptophyta</taxon>
        <taxon>Embryophyta</taxon>
        <taxon>Tracheophyta</taxon>
        <taxon>Spermatophyta</taxon>
        <taxon>Magnoliopsida</taxon>
        <taxon>eudicotyledons</taxon>
        <taxon>Gunneridae</taxon>
        <taxon>Pentapetalae</taxon>
        <taxon>rosids</taxon>
        <taxon>malvids</taxon>
        <taxon>Brassicales</taxon>
        <taxon>Brassicaceae</taxon>
        <taxon>Camelineae</taxon>
        <taxon>Arabidopsis</taxon>
    </lineage>
</organism>
<reference key="1">
    <citation type="journal article" date="2000" name="Nature">
        <title>Sequence and analysis of chromosome 3 of the plant Arabidopsis thaliana.</title>
        <authorList>
            <person name="Salanoubat M."/>
            <person name="Lemcke K."/>
            <person name="Rieger M."/>
            <person name="Ansorge W."/>
            <person name="Unseld M."/>
            <person name="Fartmann B."/>
            <person name="Valle G."/>
            <person name="Bloecker H."/>
            <person name="Perez-Alonso M."/>
            <person name="Obermaier B."/>
            <person name="Delseny M."/>
            <person name="Boutry M."/>
            <person name="Grivell L.A."/>
            <person name="Mache R."/>
            <person name="Puigdomenech P."/>
            <person name="De Simone V."/>
            <person name="Choisne N."/>
            <person name="Artiguenave F."/>
            <person name="Robert C."/>
            <person name="Brottier P."/>
            <person name="Wincker P."/>
            <person name="Cattolico L."/>
            <person name="Weissenbach J."/>
            <person name="Saurin W."/>
            <person name="Quetier F."/>
            <person name="Schaefer M."/>
            <person name="Mueller-Auer S."/>
            <person name="Gabel C."/>
            <person name="Fuchs M."/>
            <person name="Benes V."/>
            <person name="Wurmbach E."/>
            <person name="Drzonek H."/>
            <person name="Erfle H."/>
            <person name="Jordan N."/>
            <person name="Bangert S."/>
            <person name="Wiedelmann R."/>
            <person name="Kranz H."/>
            <person name="Voss H."/>
            <person name="Holland R."/>
            <person name="Brandt P."/>
            <person name="Nyakatura G."/>
            <person name="Vezzi A."/>
            <person name="D'Angelo M."/>
            <person name="Pallavicini A."/>
            <person name="Toppo S."/>
            <person name="Simionati B."/>
            <person name="Conrad A."/>
            <person name="Hornischer K."/>
            <person name="Kauer G."/>
            <person name="Loehnert T.-H."/>
            <person name="Nordsiek G."/>
            <person name="Reichelt J."/>
            <person name="Scharfe M."/>
            <person name="Schoen O."/>
            <person name="Bargues M."/>
            <person name="Terol J."/>
            <person name="Climent J."/>
            <person name="Navarro P."/>
            <person name="Collado C."/>
            <person name="Perez-Perez A."/>
            <person name="Ottenwaelder B."/>
            <person name="Duchemin D."/>
            <person name="Cooke R."/>
            <person name="Laudie M."/>
            <person name="Berger-Llauro C."/>
            <person name="Purnelle B."/>
            <person name="Masuy D."/>
            <person name="de Haan M."/>
            <person name="Maarse A.C."/>
            <person name="Alcaraz J.-P."/>
            <person name="Cottet A."/>
            <person name="Casacuberta E."/>
            <person name="Monfort A."/>
            <person name="Argiriou A."/>
            <person name="Flores M."/>
            <person name="Liguori R."/>
            <person name="Vitale D."/>
            <person name="Mannhaupt G."/>
            <person name="Haase D."/>
            <person name="Schoof H."/>
            <person name="Rudd S."/>
            <person name="Zaccaria P."/>
            <person name="Mewes H.-W."/>
            <person name="Mayer K.F.X."/>
            <person name="Kaul S."/>
            <person name="Town C.D."/>
            <person name="Koo H.L."/>
            <person name="Tallon L.J."/>
            <person name="Jenkins J."/>
            <person name="Rooney T."/>
            <person name="Rizzo M."/>
            <person name="Walts A."/>
            <person name="Utterback T."/>
            <person name="Fujii C.Y."/>
            <person name="Shea T.P."/>
            <person name="Creasy T.H."/>
            <person name="Haas B."/>
            <person name="Maiti R."/>
            <person name="Wu D."/>
            <person name="Peterson J."/>
            <person name="Van Aken S."/>
            <person name="Pai G."/>
            <person name="Militscher J."/>
            <person name="Sellers P."/>
            <person name="Gill J.E."/>
            <person name="Feldblyum T.V."/>
            <person name="Preuss D."/>
            <person name="Lin X."/>
            <person name="Nierman W.C."/>
            <person name="Salzberg S.L."/>
            <person name="White O."/>
            <person name="Venter J.C."/>
            <person name="Fraser C.M."/>
            <person name="Kaneko T."/>
            <person name="Nakamura Y."/>
            <person name="Sato S."/>
            <person name="Kato T."/>
            <person name="Asamizu E."/>
            <person name="Sasamoto S."/>
            <person name="Kimura T."/>
            <person name="Idesawa K."/>
            <person name="Kawashima K."/>
            <person name="Kishida Y."/>
            <person name="Kiyokawa C."/>
            <person name="Kohara M."/>
            <person name="Matsumoto M."/>
            <person name="Matsuno A."/>
            <person name="Muraki A."/>
            <person name="Nakayama S."/>
            <person name="Nakazaki N."/>
            <person name="Shinpo S."/>
            <person name="Takeuchi C."/>
            <person name="Wada T."/>
            <person name="Watanabe A."/>
            <person name="Yamada M."/>
            <person name="Yasuda M."/>
            <person name="Tabata S."/>
        </authorList>
    </citation>
    <scope>NUCLEOTIDE SEQUENCE [LARGE SCALE GENOMIC DNA]</scope>
    <source>
        <strain>cv. Columbia</strain>
    </source>
</reference>
<reference key="2">
    <citation type="journal article" date="2017" name="Plant J.">
        <title>Araport11: a complete reannotation of the Arabidopsis thaliana reference genome.</title>
        <authorList>
            <person name="Cheng C.Y."/>
            <person name="Krishnakumar V."/>
            <person name="Chan A.P."/>
            <person name="Thibaud-Nissen F."/>
            <person name="Schobel S."/>
            <person name="Town C.D."/>
        </authorList>
    </citation>
    <scope>GENOME REANNOTATION</scope>
    <source>
        <strain>cv. Columbia</strain>
    </source>
</reference>
<reference key="3">
    <citation type="journal article" date="2003" name="Science">
        <title>Empirical analysis of transcriptional activity in the Arabidopsis genome.</title>
        <authorList>
            <person name="Yamada K."/>
            <person name="Lim J."/>
            <person name="Dale J.M."/>
            <person name="Chen H."/>
            <person name="Shinn P."/>
            <person name="Palm C.J."/>
            <person name="Southwick A.M."/>
            <person name="Wu H.C."/>
            <person name="Kim C.J."/>
            <person name="Nguyen M."/>
            <person name="Pham P.K."/>
            <person name="Cheuk R.F."/>
            <person name="Karlin-Newmann G."/>
            <person name="Liu S.X."/>
            <person name="Lam B."/>
            <person name="Sakano H."/>
            <person name="Wu T."/>
            <person name="Yu G."/>
            <person name="Miranda M."/>
            <person name="Quach H.L."/>
            <person name="Tripp M."/>
            <person name="Chang C.H."/>
            <person name="Lee J.M."/>
            <person name="Toriumi M.J."/>
            <person name="Chan M.M."/>
            <person name="Tang C.C."/>
            <person name="Onodera C.S."/>
            <person name="Deng J.M."/>
            <person name="Akiyama K."/>
            <person name="Ansari Y."/>
            <person name="Arakawa T."/>
            <person name="Banh J."/>
            <person name="Banno F."/>
            <person name="Bowser L."/>
            <person name="Brooks S.Y."/>
            <person name="Carninci P."/>
            <person name="Chao Q."/>
            <person name="Choy N."/>
            <person name="Enju A."/>
            <person name="Goldsmith A.D."/>
            <person name="Gurjal M."/>
            <person name="Hansen N.F."/>
            <person name="Hayashizaki Y."/>
            <person name="Johnson-Hopson C."/>
            <person name="Hsuan V.W."/>
            <person name="Iida K."/>
            <person name="Karnes M."/>
            <person name="Khan S."/>
            <person name="Koesema E."/>
            <person name="Ishida J."/>
            <person name="Jiang P.X."/>
            <person name="Jones T."/>
            <person name="Kawai J."/>
            <person name="Kamiya A."/>
            <person name="Meyers C."/>
            <person name="Nakajima M."/>
            <person name="Narusaka M."/>
            <person name="Seki M."/>
            <person name="Sakurai T."/>
            <person name="Satou M."/>
            <person name="Tamse R."/>
            <person name="Vaysberg M."/>
            <person name="Wallender E.K."/>
            <person name="Wong C."/>
            <person name="Yamamura Y."/>
            <person name="Yuan S."/>
            <person name="Shinozaki K."/>
            <person name="Davis R.W."/>
            <person name="Theologis A."/>
            <person name="Ecker J.R."/>
        </authorList>
    </citation>
    <scope>NUCLEOTIDE SEQUENCE [LARGE SCALE MRNA] (ISOFORM 1)</scope>
    <source>
        <strain>cv. Columbia</strain>
    </source>
</reference>
<reference key="4">
    <citation type="submission" date="2004-09" db="EMBL/GenBank/DDBJ databases">
        <title>Large-scale analysis of RIKEN Arabidopsis full-length (RAFL) cDNAs.</title>
        <authorList>
            <person name="Totoki Y."/>
            <person name="Seki M."/>
            <person name="Ishida J."/>
            <person name="Nakajima M."/>
            <person name="Enju A."/>
            <person name="Kamiya A."/>
            <person name="Narusaka M."/>
            <person name="Shin-i T."/>
            <person name="Nakagawa M."/>
            <person name="Sakamoto N."/>
            <person name="Oishi K."/>
            <person name="Kohara Y."/>
            <person name="Kobayashi M."/>
            <person name="Toyoda A."/>
            <person name="Sakaki Y."/>
            <person name="Sakurai T."/>
            <person name="Iida K."/>
            <person name="Akiyama K."/>
            <person name="Satou M."/>
            <person name="Toyoda T."/>
            <person name="Konagaya A."/>
            <person name="Carninci P."/>
            <person name="Kawai J."/>
            <person name="Hayashizaki Y."/>
            <person name="Shinozaki K."/>
        </authorList>
    </citation>
    <scope>NUCLEOTIDE SEQUENCE [LARGE SCALE MRNA] (ISOFORM 1)</scope>
    <source>
        <strain>cv. Columbia</strain>
    </source>
</reference>
<comment type="function">
    <text evidence="1">Probably involved in plant defense response.</text>
</comment>
<comment type="alternative products">
    <event type="alternative splicing"/>
    <isoform>
        <id>Q6NQP4-1</id>
        <name>1</name>
        <sequence type="displayed"/>
    </isoform>
    <isoform>
        <id>Q6NQP4-2</id>
        <name>2</name>
        <sequence type="described" ref="VSP_058843"/>
    </isoform>
</comment>
<comment type="sequence caution" evidence="3">
    <conflict type="erroneous gene model prediction">
        <sequence resource="EMBL-CDS" id="CAB83146"/>
    </conflict>
</comment>
<evidence type="ECO:0000250" key="1">
    <source>
        <dbReference type="UniProtKB" id="Q9FPJ5"/>
    </source>
</evidence>
<evidence type="ECO:0000255" key="2"/>
<evidence type="ECO:0000305" key="3"/>
<evidence type="ECO:0000312" key="4">
    <source>
        <dbReference type="Araport" id="AT3G43740"/>
    </source>
</evidence>
<evidence type="ECO:0000312" key="5">
    <source>
        <dbReference type="EMBL" id="AAQ62408.1"/>
    </source>
</evidence>
<evidence type="ECO:0000312" key="6">
    <source>
        <dbReference type="EMBL" id="CAB83146.1"/>
    </source>
</evidence>
<keyword id="KW-0025">Alternative splicing</keyword>
<keyword id="KW-0433">Leucine-rich repeat</keyword>
<keyword id="KW-0611">Plant defense</keyword>
<keyword id="KW-1185">Reference proteome</keyword>
<keyword id="KW-0677">Repeat</keyword>
<keyword id="KW-0732">Signal</keyword>
<accession>Q6NQP4</accession>
<accession>F4J0G6</accession>
<accession>Q67XM7</accession>
<accession>Q9LZH3</accession>